<sequence>MNKDVSLGQPIVRYEDGKLFNTTDQYVTEFPLTIMVNGEEFATVICSPTNLEELVIGFLASEGAILKRDELKSVLIDDSKGFAHVELNKDLGDRFQYSTKRMIASCCGKSREFYFQNDAAIAKTSMSKITLTPMQIINMMTRLQSASHIYQETGGLHNAAISDGLTFFVHRQDIGRHNALDKLYGFCIQRHITVRDKVLIFSGRISSEILIKAAKIGVGVILSKSAPTTLAVTLANDLNITAVGFIRNGGFNIYSHPERIIDSEQ</sequence>
<keyword id="KW-0963">Cytoplasm</keyword>
<keyword id="KW-0501">Molybdenum cofactor biosynthesis</keyword>
<keyword id="KW-1185">Reference proteome</keyword>
<reference key="1">
    <citation type="book" date="2006" name="Gram positive pathogens, 2nd edition">
        <title>The Staphylococcus aureus NCTC 8325 genome.</title>
        <editorList>
            <person name="Fischetti V."/>
            <person name="Novick R."/>
            <person name="Ferretti J."/>
            <person name="Portnoy D."/>
            <person name="Rood J."/>
        </editorList>
        <authorList>
            <person name="Gillaspy A.F."/>
            <person name="Worrell V."/>
            <person name="Orvis J."/>
            <person name="Roe B.A."/>
            <person name="Dyer D.W."/>
            <person name="Iandolo J.J."/>
        </authorList>
    </citation>
    <scope>NUCLEOTIDE SEQUENCE [LARGE SCALE GENOMIC DNA]</scope>
    <source>
        <strain>NCTC 8325 / PS 47</strain>
    </source>
</reference>
<feature type="chain" id="PRO_1000020824" description="Sulfur carrier protein FdhD">
    <location>
        <begin position="1"/>
        <end position="265"/>
    </location>
</feature>
<feature type="active site" description="Cysteine persulfide intermediate" evidence="1">
    <location>
        <position position="107"/>
    </location>
</feature>
<name>FDHD_STAA8</name>
<protein>
    <recommendedName>
        <fullName evidence="1">Sulfur carrier protein FdhD</fullName>
    </recommendedName>
</protein>
<organism>
    <name type="scientific">Staphylococcus aureus (strain NCTC 8325 / PS 47)</name>
    <dbReference type="NCBI Taxonomy" id="93061"/>
    <lineage>
        <taxon>Bacteria</taxon>
        <taxon>Bacillati</taxon>
        <taxon>Bacillota</taxon>
        <taxon>Bacilli</taxon>
        <taxon>Bacillales</taxon>
        <taxon>Staphylococcaceae</taxon>
        <taxon>Staphylococcus</taxon>
    </lineage>
</organism>
<evidence type="ECO:0000255" key="1">
    <source>
        <dbReference type="HAMAP-Rule" id="MF_00187"/>
    </source>
</evidence>
<dbReference type="EMBL" id="CP000253">
    <property type="protein sequence ID" value="ABD31563.1"/>
    <property type="molecule type" value="Genomic_DNA"/>
</dbReference>
<dbReference type="RefSeq" id="WP_001030825.1">
    <property type="nucleotide sequence ID" value="NZ_LS483365.1"/>
</dbReference>
<dbReference type="RefSeq" id="YP_501012.1">
    <property type="nucleotide sequence ID" value="NC_007795.1"/>
</dbReference>
<dbReference type="SMR" id="Q2FVX3"/>
<dbReference type="STRING" id="93061.SAOUHSC_02550"/>
<dbReference type="PaxDb" id="1280-SAXN108_2529"/>
<dbReference type="GeneID" id="3921138"/>
<dbReference type="KEGG" id="sao:SAOUHSC_02550"/>
<dbReference type="PATRIC" id="fig|93061.5.peg.2299"/>
<dbReference type="eggNOG" id="COG1526">
    <property type="taxonomic scope" value="Bacteria"/>
</dbReference>
<dbReference type="HOGENOM" id="CLU_056887_4_1_9"/>
<dbReference type="OrthoDB" id="9782042at2"/>
<dbReference type="PRO" id="PR:Q2FVX3"/>
<dbReference type="Proteomes" id="UP000008816">
    <property type="component" value="Chromosome"/>
</dbReference>
<dbReference type="GO" id="GO:0005737">
    <property type="term" value="C:cytoplasm"/>
    <property type="evidence" value="ECO:0007669"/>
    <property type="project" value="UniProtKB-SubCell"/>
</dbReference>
<dbReference type="GO" id="GO:0097163">
    <property type="term" value="F:sulfur carrier activity"/>
    <property type="evidence" value="ECO:0007669"/>
    <property type="project" value="UniProtKB-UniRule"/>
</dbReference>
<dbReference type="GO" id="GO:0016783">
    <property type="term" value="F:sulfurtransferase activity"/>
    <property type="evidence" value="ECO:0007669"/>
    <property type="project" value="InterPro"/>
</dbReference>
<dbReference type="GO" id="GO:0006777">
    <property type="term" value="P:Mo-molybdopterin cofactor biosynthetic process"/>
    <property type="evidence" value="ECO:0007669"/>
    <property type="project" value="UniProtKB-UniRule"/>
</dbReference>
<dbReference type="Gene3D" id="3.10.20.10">
    <property type="match status" value="1"/>
</dbReference>
<dbReference type="Gene3D" id="3.40.140.10">
    <property type="entry name" value="Cytidine Deaminase, domain 2"/>
    <property type="match status" value="1"/>
</dbReference>
<dbReference type="HAMAP" id="MF_00187">
    <property type="entry name" value="FdhD"/>
    <property type="match status" value="1"/>
</dbReference>
<dbReference type="InterPro" id="IPR016193">
    <property type="entry name" value="Cytidine_deaminase-like"/>
</dbReference>
<dbReference type="InterPro" id="IPR003786">
    <property type="entry name" value="FdhD"/>
</dbReference>
<dbReference type="NCBIfam" id="TIGR00129">
    <property type="entry name" value="fdhD_narQ"/>
    <property type="match status" value="1"/>
</dbReference>
<dbReference type="PANTHER" id="PTHR30592">
    <property type="entry name" value="FORMATE DEHYDROGENASE"/>
    <property type="match status" value="1"/>
</dbReference>
<dbReference type="PANTHER" id="PTHR30592:SF1">
    <property type="entry name" value="SULFUR CARRIER PROTEIN FDHD"/>
    <property type="match status" value="1"/>
</dbReference>
<dbReference type="Pfam" id="PF02634">
    <property type="entry name" value="FdhD-NarQ"/>
    <property type="match status" value="1"/>
</dbReference>
<dbReference type="PIRSF" id="PIRSF015626">
    <property type="entry name" value="FdhD"/>
    <property type="match status" value="1"/>
</dbReference>
<dbReference type="SUPFAM" id="SSF53927">
    <property type="entry name" value="Cytidine deaminase-like"/>
    <property type="match status" value="1"/>
</dbReference>
<gene>
    <name evidence="1" type="primary">fdhD</name>
    <name type="ordered locus">SAOUHSC_02550</name>
</gene>
<proteinExistence type="inferred from homology"/>
<comment type="function">
    <text evidence="1">Required for formate dehydrogenase (FDH) activity. Acts as a sulfur carrier protein that transfers sulfur from IscS to the molybdenum cofactor prior to its insertion into FDH.</text>
</comment>
<comment type="subcellular location">
    <subcellularLocation>
        <location evidence="1">Cytoplasm</location>
    </subcellularLocation>
</comment>
<comment type="similarity">
    <text evidence="1">Belongs to the FdhD family.</text>
</comment>
<accession>Q2FVX3</accession>